<protein>
    <recommendedName>
        <fullName evidence="1">CDP-diacylglycerol pyrophosphatase</fullName>
        <ecNumber evidence="1">3.6.1.26</ecNumber>
    </recommendedName>
    <alternativeName>
        <fullName evidence="1">CDP-diacylglycerol phosphatidylhydrolase</fullName>
    </alternativeName>
    <alternativeName>
        <fullName evidence="1">CDP-diglyceride hydrolase</fullName>
    </alternativeName>
</protein>
<accession>Q8X7A5</accession>
<keyword id="KW-0002">3D-structure</keyword>
<keyword id="KW-0997">Cell inner membrane</keyword>
<keyword id="KW-1003">Cell membrane</keyword>
<keyword id="KW-0378">Hydrolase</keyword>
<keyword id="KW-0444">Lipid biosynthesis</keyword>
<keyword id="KW-0443">Lipid metabolism</keyword>
<keyword id="KW-0472">Membrane</keyword>
<keyword id="KW-0594">Phospholipid biosynthesis</keyword>
<keyword id="KW-1208">Phospholipid metabolism</keyword>
<keyword id="KW-1185">Reference proteome</keyword>
<keyword id="KW-0812">Transmembrane</keyword>
<keyword id="KW-1133">Transmembrane helix</keyword>
<evidence type="ECO:0000255" key="1">
    <source>
        <dbReference type="HAMAP-Rule" id="MF_00319"/>
    </source>
</evidence>
<evidence type="ECO:0007829" key="2">
    <source>
        <dbReference type="PDB" id="2POF"/>
    </source>
</evidence>
<proteinExistence type="evidence at protein level"/>
<gene>
    <name evidence="1" type="primary">cdh</name>
    <name type="ordered locus">Z5463</name>
    <name type="ordered locus">ECs4843</name>
</gene>
<comment type="catalytic activity">
    <reaction evidence="1">
        <text>a CDP-1,2-diacyl-sn-glycerol + H2O = a 1,2-diacyl-sn-glycero-3-phosphate + CMP + 2 H(+)</text>
        <dbReference type="Rhea" id="RHEA:15221"/>
        <dbReference type="ChEBI" id="CHEBI:15377"/>
        <dbReference type="ChEBI" id="CHEBI:15378"/>
        <dbReference type="ChEBI" id="CHEBI:58332"/>
        <dbReference type="ChEBI" id="CHEBI:58608"/>
        <dbReference type="ChEBI" id="CHEBI:60377"/>
        <dbReference type="EC" id="3.6.1.26"/>
    </reaction>
</comment>
<comment type="pathway">
    <text evidence="1">Phospholipid metabolism; CDP-diacylglycerol degradation; phosphatidate from CDP-diacylglycerol: step 1/1.</text>
</comment>
<comment type="subcellular location">
    <subcellularLocation>
        <location evidence="1">Cell inner membrane</location>
        <topology evidence="1">Single-pass membrane protein</topology>
    </subcellularLocation>
</comment>
<comment type="similarity">
    <text evidence="1">Belongs to the Cdh family.</text>
</comment>
<feature type="chain" id="PRO_0000198575" description="CDP-diacylglycerol pyrophosphatase">
    <location>
        <begin position="1"/>
        <end position="251"/>
    </location>
</feature>
<feature type="transmembrane region" description="Helical" evidence="1">
    <location>
        <begin position="4"/>
        <end position="24"/>
    </location>
</feature>
<feature type="helix" evidence="2">
    <location>
        <begin position="33"/>
        <end position="40"/>
    </location>
</feature>
<feature type="helix" evidence="2">
    <location>
        <begin position="42"/>
        <end position="49"/>
    </location>
</feature>
<feature type="strand" evidence="2">
    <location>
        <begin position="55"/>
        <end position="58"/>
    </location>
</feature>
<feature type="turn" evidence="2">
    <location>
        <begin position="60"/>
        <end position="62"/>
    </location>
</feature>
<feature type="strand" evidence="2">
    <location>
        <begin position="63"/>
        <end position="68"/>
    </location>
</feature>
<feature type="strand" evidence="2">
    <location>
        <begin position="70"/>
        <end position="74"/>
    </location>
</feature>
<feature type="strand" evidence="2">
    <location>
        <begin position="76"/>
        <end position="82"/>
    </location>
</feature>
<feature type="helix" evidence="2">
    <location>
        <begin position="90"/>
        <end position="93"/>
    </location>
</feature>
<feature type="helix" evidence="2">
    <location>
        <begin position="100"/>
        <end position="106"/>
    </location>
</feature>
<feature type="helix" evidence="2">
    <location>
        <begin position="109"/>
        <end position="115"/>
    </location>
</feature>
<feature type="helix" evidence="2">
    <location>
        <begin position="121"/>
        <end position="123"/>
    </location>
</feature>
<feature type="strand" evidence="2">
    <location>
        <begin position="124"/>
        <end position="129"/>
    </location>
</feature>
<feature type="helix" evidence="2">
    <location>
        <begin position="131"/>
        <end position="133"/>
    </location>
</feature>
<feature type="strand" evidence="2">
    <location>
        <begin position="141"/>
        <end position="146"/>
    </location>
</feature>
<feature type="helix" evidence="2">
    <location>
        <begin position="148"/>
        <end position="155"/>
    </location>
</feature>
<feature type="helix" evidence="2">
    <location>
        <begin position="156"/>
        <end position="160"/>
    </location>
</feature>
<feature type="strand" evidence="2">
    <location>
        <begin position="178"/>
        <end position="182"/>
    </location>
</feature>
<feature type="helix" evidence="2">
    <location>
        <begin position="184"/>
        <end position="189"/>
    </location>
</feature>
<feature type="helix" evidence="2">
    <location>
        <begin position="192"/>
        <end position="199"/>
    </location>
</feature>
<feature type="turn" evidence="2">
    <location>
        <begin position="201"/>
        <end position="205"/>
    </location>
</feature>
<feature type="helix" evidence="2">
    <location>
        <begin position="207"/>
        <end position="209"/>
    </location>
</feature>
<feature type="strand" evidence="2">
    <location>
        <begin position="210"/>
        <end position="216"/>
    </location>
</feature>
<feature type="strand" evidence="2">
    <location>
        <begin position="222"/>
        <end position="228"/>
    </location>
</feature>
<feature type="turn" evidence="2">
    <location>
        <begin position="231"/>
        <end position="234"/>
    </location>
</feature>
<feature type="helix" evidence="2">
    <location>
        <begin position="239"/>
        <end position="242"/>
    </location>
</feature>
<reference key="1">
    <citation type="journal article" date="2001" name="Nature">
        <title>Genome sequence of enterohaemorrhagic Escherichia coli O157:H7.</title>
        <authorList>
            <person name="Perna N.T."/>
            <person name="Plunkett G. III"/>
            <person name="Burland V."/>
            <person name="Mau B."/>
            <person name="Glasner J.D."/>
            <person name="Rose D.J."/>
            <person name="Mayhew G.F."/>
            <person name="Evans P.S."/>
            <person name="Gregor J."/>
            <person name="Kirkpatrick H.A."/>
            <person name="Posfai G."/>
            <person name="Hackett J."/>
            <person name="Klink S."/>
            <person name="Boutin A."/>
            <person name="Shao Y."/>
            <person name="Miller L."/>
            <person name="Grotbeck E.J."/>
            <person name="Davis N.W."/>
            <person name="Lim A."/>
            <person name="Dimalanta E.T."/>
            <person name="Potamousis K."/>
            <person name="Apodaca J."/>
            <person name="Anantharaman T.S."/>
            <person name="Lin J."/>
            <person name="Yen G."/>
            <person name="Schwartz D.C."/>
            <person name="Welch R.A."/>
            <person name="Blattner F.R."/>
        </authorList>
    </citation>
    <scope>NUCLEOTIDE SEQUENCE [LARGE SCALE GENOMIC DNA]</scope>
    <source>
        <strain>O157:H7 / EDL933 / ATCC 700927 / EHEC</strain>
    </source>
</reference>
<reference key="2">
    <citation type="journal article" date="2001" name="DNA Res.">
        <title>Complete genome sequence of enterohemorrhagic Escherichia coli O157:H7 and genomic comparison with a laboratory strain K-12.</title>
        <authorList>
            <person name="Hayashi T."/>
            <person name="Makino K."/>
            <person name="Ohnishi M."/>
            <person name="Kurokawa K."/>
            <person name="Ishii K."/>
            <person name="Yokoyama K."/>
            <person name="Han C.-G."/>
            <person name="Ohtsubo E."/>
            <person name="Nakayama K."/>
            <person name="Murata T."/>
            <person name="Tanaka M."/>
            <person name="Tobe T."/>
            <person name="Iida T."/>
            <person name="Takami H."/>
            <person name="Honda T."/>
            <person name="Sasakawa C."/>
            <person name="Ogasawara N."/>
            <person name="Yasunaga T."/>
            <person name="Kuhara S."/>
            <person name="Shiba T."/>
            <person name="Hattori M."/>
            <person name="Shinagawa H."/>
        </authorList>
    </citation>
    <scope>NUCLEOTIDE SEQUENCE [LARGE SCALE GENOMIC DNA]</scope>
    <source>
        <strain>O157:H7 / Sakai / RIMD 0509952 / EHEC</strain>
    </source>
</reference>
<sequence length="251" mass="28383">MKKAGLLFLVMIVIAVVAAGIGYWKLTGEESDTLRKIVLEECLPNQQQNQNPSPCAEVKPNAGYVVLKDLNGPLQYLLMPTYRINGTESPLLTDPSTPNFFWLAWQARDFMSKKYGQPVPDRAVSLAINSRTGRTQNHFHIHISCIRPDVREQLDNNLANISSRWLPLPGGLRGHEYLARRVTESELVQRSPFMMLAEEVPEAREHMGSYGLAMVRQSDNSFVLLATQRNLLTLNRASAEEIQDHQCEILR</sequence>
<name>CDH_ECO57</name>
<dbReference type="EC" id="3.6.1.26" evidence="1"/>
<dbReference type="EMBL" id="AE005174">
    <property type="protein sequence ID" value="AAG59111.1"/>
    <property type="molecule type" value="Genomic_DNA"/>
</dbReference>
<dbReference type="EMBL" id="BA000007">
    <property type="protein sequence ID" value="BAB38266.1"/>
    <property type="molecule type" value="Genomic_DNA"/>
</dbReference>
<dbReference type="PIR" id="C86081">
    <property type="entry name" value="C86081"/>
</dbReference>
<dbReference type="PIR" id="C91234">
    <property type="entry name" value="C91234"/>
</dbReference>
<dbReference type="RefSeq" id="NP_312870.1">
    <property type="nucleotide sequence ID" value="NC_002695.1"/>
</dbReference>
<dbReference type="RefSeq" id="WP_000708998.1">
    <property type="nucleotide sequence ID" value="NZ_VOAI01000016.1"/>
</dbReference>
<dbReference type="PDB" id="2POF">
    <property type="method" value="X-ray"/>
    <property type="resolution" value="1.40 A"/>
    <property type="chains" value="A/B=27-251"/>
</dbReference>
<dbReference type="PDBsum" id="2POF"/>
<dbReference type="SMR" id="Q8X7A5"/>
<dbReference type="STRING" id="155864.Z5463"/>
<dbReference type="GeneID" id="915054"/>
<dbReference type="GeneID" id="93777980"/>
<dbReference type="KEGG" id="ece:Z5463"/>
<dbReference type="KEGG" id="ecs:ECs_4843"/>
<dbReference type="PATRIC" id="fig|386585.9.peg.5065"/>
<dbReference type="eggNOG" id="COG2134">
    <property type="taxonomic scope" value="Bacteria"/>
</dbReference>
<dbReference type="HOGENOM" id="CLU_077117_0_1_6"/>
<dbReference type="OMA" id="CLPNYEK"/>
<dbReference type="UniPathway" id="UPA00609">
    <property type="reaction ID" value="UER00664"/>
</dbReference>
<dbReference type="EvolutionaryTrace" id="Q8X7A5"/>
<dbReference type="Proteomes" id="UP000000558">
    <property type="component" value="Chromosome"/>
</dbReference>
<dbReference type="Proteomes" id="UP000002519">
    <property type="component" value="Chromosome"/>
</dbReference>
<dbReference type="GO" id="GO:0005886">
    <property type="term" value="C:plasma membrane"/>
    <property type="evidence" value="ECO:0007669"/>
    <property type="project" value="UniProtKB-SubCell"/>
</dbReference>
<dbReference type="GO" id="GO:0008715">
    <property type="term" value="F:CDP-diacylglycerol diphosphatase activity"/>
    <property type="evidence" value="ECO:0007669"/>
    <property type="project" value="UniProtKB-UniRule"/>
</dbReference>
<dbReference type="GO" id="GO:0046342">
    <property type="term" value="P:CDP-diacylglycerol catabolic process"/>
    <property type="evidence" value="ECO:0007669"/>
    <property type="project" value="UniProtKB-UniRule"/>
</dbReference>
<dbReference type="GO" id="GO:0008654">
    <property type="term" value="P:phospholipid biosynthetic process"/>
    <property type="evidence" value="ECO:0007669"/>
    <property type="project" value="UniProtKB-KW"/>
</dbReference>
<dbReference type="FunFam" id="3.30.428.30:FF:000001">
    <property type="entry name" value="CDP-diacylglycerol pyrophosphatase"/>
    <property type="match status" value="1"/>
</dbReference>
<dbReference type="Gene3D" id="3.30.428.30">
    <property type="entry name" value="HIT family - CDH-like"/>
    <property type="match status" value="1"/>
</dbReference>
<dbReference type="HAMAP" id="MF_00319">
    <property type="entry name" value="Cdh"/>
    <property type="match status" value="1"/>
</dbReference>
<dbReference type="InterPro" id="IPR003763">
    <property type="entry name" value="CDP-diacylglyc_Pase"/>
</dbReference>
<dbReference type="InterPro" id="IPR015993">
    <property type="entry name" value="CDP-diacylglyc_Pase_proteobac"/>
</dbReference>
<dbReference type="InterPro" id="IPR036265">
    <property type="entry name" value="HIT-like_sf"/>
</dbReference>
<dbReference type="NCBIfam" id="TIGR00672">
    <property type="entry name" value="cdh"/>
    <property type="match status" value="1"/>
</dbReference>
<dbReference type="NCBIfam" id="NF003986">
    <property type="entry name" value="PRK05471.1-5"/>
    <property type="match status" value="1"/>
</dbReference>
<dbReference type="NCBIfam" id="NF003987">
    <property type="entry name" value="PRK05471.1-6"/>
    <property type="match status" value="1"/>
</dbReference>
<dbReference type="Pfam" id="PF02611">
    <property type="entry name" value="CDH"/>
    <property type="match status" value="1"/>
</dbReference>
<dbReference type="PIRSF" id="PIRSF001273">
    <property type="entry name" value="CDH"/>
    <property type="match status" value="1"/>
</dbReference>
<dbReference type="SUPFAM" id="SSF54197">
    <property type="entry name" value="HIT-like"/>
    <property type="match status" value="1"/>
</dbReference>
<organism>
    <name type="scientific">Escherichia coli O157:H7</name>
    <dbReference type="NCBI Taxonomy" id="83334"/>
    <lineage>
        <taxon>Bacteria</taxon>
        <taxon>Pseudomonadati</taxon>
        <taxon>Pseudomonadota</taxon>
        <taxon>Gammaproteobacteria</taxon>
        <taxon>Enterobacterales</taxon>
        <taxon>Enterobacteriaceae</taxon>
        <taxon>Escherichia</taxon>
    </lineage>
</organism>